<proteinExistence type="evidence at protein level"/>
<accession>Q9S7Q7</accession>
<name>FLC_ARATH</name>
<sequence>MGRKKLEIKRIENKSSRQVTFSKRRNGLIEKARQLSVLCDASVALLVVSASGKLYSFSSGDNLVKILDRYGKQHADDLKALDHQSKALNYGSHYELLELVDSKLVGSNVKNVSIDALVQLEEHLETALSVTRAKKTELMLKLVENLKEKEKMLKEENQVLASQMENNHHVGAEAEMEMSPAGQISDNLPVTLPLLN</sequence>
<gene>
    <name evidence="15" type="primary">FLC</name>
    <name evidence="14" type="synonym">FLF</name>
    <name evidence="16" type="ordered locus">At5g10140</name>
    <name evidence="17" type="ORF">T31P16.130</name>
</gene>
<protein>
    <recommendedName>
        <fullName evidence="15">MADS-box protein FLOWERING LOCUS C</fullName>
    </recommendedName>
    <alternativeName>
        <fullName evidence="14">MADS-box protein FLOWERING LOCUS F</fullName>
    </alternativeName>
</protein>
<evidence type="ECO:0000255" key="1">
    <source>
        <dbReference type="PROSITE-ProRule" id="PRU00251"/>
    </source>
</evidence>
<evidence type="ECO:0000255" key="2">
    <source>
        <dbReference type="PROSITE-ProRule" id="PRU00629"/>
    </source>
</evidence>
<evidence type="ECO:0000255" key="3">
    <source>
        <dbReference type="PROSITE-ProRule" id="PRU00768"/>
    </source>
</evidence>
<evidence type="ECO:0000269" key="4">
    <source>
    </source>
</evidence>
<evidence type="ECO:0000269" key="5">
    <source>
    </source>
</evidence>
<evidence type="ECO:0000269" key="6">
    <source>
    </source>
</evidence>
<evidence type="ECO:0000269" key="7">
    <source>
    </source>
</evidence>
<evidence type="ECO:0000269" key="8">
    <source>
    </source>
</evidence>
<evidence type="ECO:0000269" key="9">
    <source>
    </source>
</evidence>
<evidence type="ECO:0000269" key="10">
    <source>
    </source>
</evidence>
<evidence type="ECO:0000269" key="11">
    <source>
    </source>
</evidence>
<evidence type="ECO:0000269" key="12">
    <source>
    </source>
</evidence>
<evidence type="ECO:0000269" key="13">
    <source>
    </source>
</evidence>
<evidence type="ECO:0000303" key="14">
    <source>
    </source>
</evidence>
<evidence type="ECO:0000303" key="15">
    <source>
    </source>
</evidence>
<evidence type="ECO:0000312" key="16">
    <source>
        <dbReference type="Araport" id="AT5G10140"/>
    </source>
</evidence>
<evidence type="ECO:0000312" key="17">
    <source>
        <dbReference type="EMBL" id="CAB92055.1"/>
    </source>
</evidence>
<reference key="1">
    <citation type="journal article" date="1999" name="Plant Cell">
        <title>The FLF MADS box gene: a repressor of flowering in Arabidopsis regulated by vernalization and methylation.</title>
        <authorList>
            <person name="Sheldon C.C."/>
            <person name="Burn J.E."/>
            <person name="Perez P.P."/>
            <person name="Metzger J."/>
            <person name="Edwards J.A."/>
            <person name="Peacock W.J."/>
            <person name="Dennis E.S."/>
        </authorList>
    </citation>
    <scope>NUCLEOTIDE SEQUENCE [GENOMIC DNA / MRNA]</scope>
    <source>
        <strain>cv. C24</strain>
        <strain>cv. Columbia</strain>
    </source>
</reference>
<reference key="2">
    <citation type="journal article" date="1999" name="Plant Cell">
        <title>FLOWERING LOCUS C encodes a novel MADS domain protein that acts as a repressor of flowering.</title>
        <authorList>
            <person name="Michaels S.D."/>
            <person name="Amasino R.M."/>
        </authorList>
    </citation>
    <scope>NUCLEOTIDE SEQUENCE [MRNA]</scope>
</reference>
<reference key="3">
    <citation type="journal article" date="2000" name="Nature">
        <title>Sequence and analysis of chromosome 5 of the plant Arabidopsis thaliana.</title>
        <authorList>
            <person name="Tabata S."/>
            <person name="Kaneko T."/>
            <person name="Nakamura Y."/>
            <person name="Kotani H."/>
            <person name="Kato T."/>
            <person name="Asamizu E."/>
            <person name="Miyajima N."/>
            <person name="Sasamoto S."/>
            <person name="Kimura T."/>
            <person name="Hosouchi T."/>
            <person name="Kawashima K."/>
            <person name="Kohara M."/>
            <person name="Matsumoto M."/>
            <person name="Matsuno A."/>
            <person name="Muraki A."/>
            <person name="Nakayama S."/>
            <person name="Nakazaki N."/>
            <person name="Naruo K."/>
            <person name="Okumura S."/>
            <person name="Shinpo S."/>
            <person name="Takeuchi C."/>
            <person name="Wada T."/>
            <person name="Watanabe A."/>
            <person name="Yamada M."/>
            <person name="Yasuda M."/>
            <person name="Sato S."/>
            <person name="de la Bastide M."/>
            <person name="Huang E."/>
            <person name="Spiegel L."/>
            <person name="Gnoj L."/>
            <person name="O'Shaughnessy A."/>
            <person name="Preston R."/>
            <person name="Habermann K."/>
            <person name="Murray J."/>
            <person name="Johnson D."/>
            <person name="Rohlfing T."/>
            <person name="Nelson J."/>
            <person name="Stoneking T."/>
            <person name="Pepin K."/>
            <person name="Spieth J."/>
            <person name="Sekhon M."/>
            <person name="Armstrong J."/>
            <person name="Becker M."/>
            <person name="Belter E."/>
            <person name="Cordum H."/>
            <person name="Cordes M."/>
            <person name="Courtney L."/>
            <person name="Courtney W."/>
            <person name="Dante M."/>
            <person name="Du H."/>
            <person name="Edwards J."/>
            <person name="Fryman J."/>
            <person name="Haakensen B."/>
            <person name="Lamar E."/>
            <person name="Latreille P."/>
            <person name="Leonard S."/>
            <person name="Meyer R."/>
            <person name="Mulvaney E."/>
            <person name="Ozersky P."/>
            <person name="Riley A."/>
            <person name="Strowmatt C."/>
            <person name="Wagner-McPherson C."/>
            <person name="Wollam A."/>
            <person name="Yoakum M."/>
            <person name="Bell M."/>
            <person name="Dedhia N."/>
            <person name="Parnell L."/>
            <person name="Shah R."/>
            <person name="Rodriguez M."/>
            <person name="Hoon See L."/>
            <person name="Vil D."/>
            <person name="Baker J."/>
            <person name="Kirchoff K."/>
            <person name="Toth K."/>
            <person name="King L."/>
            <person name="Bahret A."/>
            <person name="Miller B."/>
            <person name="Marra M.A."/>
            <person name="Martienssen R."/>
            <person name="McCombie W.R."/>
            <person name="Wilson R.K."/>
            <person name="Murphy G."/>
            <person name="Bancroft I."/>
            <person name="Volckaert G."/>
            <person name="Wambutt R."/>
            <person name="Duesterhoeft A."/>
            <person name="Stiekema W."/>
            <person name="Pohl T."/>
            <person name="Entian K.-D."/>
            <person name="Terryn N."/>
            <person name="Hartley N."/>
            <person name="Bent E."/>
            <person name="Johnson S."/>
            <person name="Langham S.-A."/>
            <person name="McCullagh B."/>
            <person name="Robben J."/>
            <person name="Grymonprez B."/>
            <person name="Zimmermann W."/>
            <person name="Ramsperger U."/>
            <person name="Wedler H."/>
            <person name="Balke K."/>
            <person name="Wedler E."/>
            <person name="Peters S."/>
            <person name="van Staveren M."/>
            <person name="Dirkse W."/>
            <person name="Mooijman P."/>
            <person name="Klein Lankhorst R."/>
            <person name="Weitzenegger T."/>
            <person name="Bothe G."/>
            <person name="Rose M."/>
            <person name="Hauf J."/>
            <person name="Berneiser S."/>
            <person name="Hempel S."/>
            <person name="Feldpausch M."/>
            <person name="Lamberth S."/>
            <person name="Villarroel R."/>
            <person name="Gielen J."/>
            <person name="Ardiles W."/>
            <person name="Bents O."/>
            <person name="Lemcke K."/>
            <person name="Kolesov G."/>
            <person name="Mayer K.F.X."/>
            <person name="Rudd S."/>
            <person name="Schoof H."/>
            <person name="Schueller C."/>
            <person name="Zaccaria P."/>
            <person name="Mewes H.-W."/>
            <person name="Bevan M."/>
            <person name="Fransz P.F."/>
        </authorList>
    </citation>
    <scope>NUCLEOTIDE SEQUENCE [LARGE SCALE GENOMIC DNA]</scope>
    <source>
        <strain>cv. Columbia</strain>
    </source>
</reference>
<reference key="4">
    <citation type="journal article" date="2017" name="Plant J.">
        <title>Araport11: a complete reannotation of the Arabidopsis thaliana reference genome.</title>
        <authorList>
            <person name="Cheng C.Y."/>
            <person name="Krishnakumar V."/>
            <person name="Chan A.P."/>
            <person name="Thibaud-Nissen F."/>
            <person name="Schobel S."/>
            <person name="Town C.D."/>
        </authorList>
    </citation>
    <scope>GENOME REANNOTATION</scope>
    <source>
        <strain>cv. Columbia</strain>
    </source>
</reference>
<reference key="5">
    <citation type="journal article" date="2000" name="Proc. Natl. Acad. Sci. U.S.A.">
        <title>The molecular basis of vernalization: the central role of FLOWERING LOCUS C (FLC).</title>
        <authorList>
            <person name="Sheldon C.C."/>
            <person name="Rouse D.T."/>
            <person name="Finnegan E.J."/>
            <person name="Peacock W.J."/>
            <person name="Dennis E.S."/>
        </authorList>
    </citation>
    <scope>FUNCTION</scope>
    <source>
        <strain>cv. Pi-0</strain>
    </source>
</reference>
<reference key="6">
    <citation type="journal article" date="2001" name="Plant Cell">
        <title>Loss of flowering locus c activity eliminates the late-flowering phenotype of frigida and autonomous pathway mutations but not responsiveness to vernalization.</title>
        <authorList>
            <person name="Michaels S.D."/>
            <person name="Amasino R.M."/>
        </authorList>
    </citation>
    <scope>FUNCTION</scope>
    <source>
        <strain>cv. Columbia</strain>
    </source>
</reference>
<reference key="7">
    <citation type="journal article" date="2003" name="Science">
        <title>Regulation of flowering time by histone acetylation in Arabidopsis.</title>
        <authorList>
            <person name="He Y."/>
            <person name="Michaels S.D."/>
            <person name="Amasino R.M."/>
        </authorList>
    </citation>
    <scope>REGULATION</scope>
</reference>
<reference key="8">
    <citation type="journal article" date="2004" name="Nature">
        <title>Vernalization in Arabidopsis thaliana is mediated by the PHD finger protein VIN3.</title>
        <authorList>
            <person name="Sung S."/>
            <person name="Amasino R.M."/>
        </authorList>
    </citation>
    <scope>INDUCTION</scope>
    <source>
        <strain>cv. Columbia</strain>
    </source>
</reference>
<reference key="9">
    <citation type="journal article" date="2005" name="Nat. Cell Biol.">
        <title>Prevention of early flowering by expression of FLOWERING LOCUS C requires methylation of histone H3 K36.</title>
        <authorList>
            <person name="Zhao Z."/>
            <person name="Yu Y."/>
            <person name="Meyer D."/>
            <person name="Wu C."/>
            <person name="Shen W.-H."/>
        </authorList>
    </citation>
    <scope>REGULATION</scope>
</reference>
<reference key="10">
    <citation type="journal article" date="2005" name="Plant J.">
        <title>HUA2 is required for the expression of floral repressors in Arabidopsis thaliana.</title>
        <authorList>
            <person name="Doyle M.R."/>
            <person name="Bizzell C.M."/>
            <person name="Keller M.R."/>
            <person name="Michaels S.D."/>
            <person name="Song J."/>
            <person name="Noh Y.-S."/>
            <person name="Amasino R.M."/>
        </authorList>
    </citation>
    <scope>INDUCTION BY HUA2</scope>
</reference>
<reference key="11">
    <citation type="journal article" date="2007" name="Mol. Cell">
        <title>The Arabidopsis RNA-binding protein FCA requires a lysine-specific demethylase 1 homolog to downregulate FLC.</title>
        <authorList>
            <person name="Liu F."/>
            <person name="Quesada V."/>
            <person name="Crevillen P."/>
            <person name="Baeurle I."/>
            <person name="Swiezewski S."/>
            <person name="Dean C."/>
        </authorList>
    </citation>
    <scope>REGULATION</scope>
</reference>
<reference key="12">
    <citation type="journal article" date="2007" name="Plant Cell">
        <title>Arabidopsis relatives of the human lysine-specific demethylase1 repress the expression of FWA and FLOWERING LOCUS C and thus promote the floral transition.</title>
        <authorList>
            <person name="Jiang D."/>
            <person name="Yang W."/>
            <person name="He Y."/>
            <person name="Amasino R.M."/>
        </authorList>
    </citation>
    <scope>REGULATION</scope>
</reference>
<reference key="13">
    <citation type="journal article" date="2008" name="Plant Cell">
        <title>ARABIDOPSIS TRITHORAX1 dynamically regulates FLOWERING LOCUS C activation via histone 3 lysine 4 trimethylation.</title>
        <authorList>
            <person name="Pien S."/>
            <person name="Fleury D."/>
            <person name="Mylne J.S."/>
            <person name="Crevillen P."/>
            <person name="Inze D."/>
            <person name="Avramova Z."/>
            <person name="Dean C."/>
            <person name="Grossniklaus U."/>
        </authorList>
    </citation>
    <scope>REGULATION BY ATX1</scope>
    <scope>DEVELOPMENTAL STAGE</scope>
    <source>
        <strain>cv. Columbia</strain>
        <strain>cv. Wassilewskija</strain>
    </source>
</reference>
<reference key="14">
    <citation type="journal article" date="2008" name="Plant J.">
        <title>The small glycine-rich RNA binding protein AtGRP7 promotes floral transition in Arabidopsis thaliana.</title>
        <authorList>
            <person name="Streitner C."/>
            <person name="Danisman S."/>
            <person name="Wehrle F."/>
            <person name="Schoening J.C."/>
            <person name="Alfano J.R."/>
            <person name="Staiger D."/>
        </authorList>
    </citation>
    <scope>INDUCTION BY RBG7</scope>
</reference>
<reference key="15">
    <citation type="journal article" date="2009" name="Plant J.">
        <title>Resetting and regulation of Flowering Locus C expression during Arabidopsis reproductive development.</title>
        <authorList>
            <person name="Choi J."/>
            <person name="Hyun Y."/>
            <person name="Kang M.J."/>
            <person name="In Yun H."/>
            <person name="Yun J.Y."/>
            <person name="Lister C."/>
            <person name="Dean C."/>
            <person name="Amasino R.M."/>
            <person name="Noh B."/>
            <person name="Noh Y.S."/>
            <person name="Choi Y."/>
        </authorList>
    </citation>
    <scope>FUNCTION</scope>
    <scope>DEVELOPMENTAL STAGE</scope>
    <scope>TISSUE SPECIFICITY</scope>
</reference>
<reference key="16">
    <citation type="journal article" date="2010" name="Plant Physiol.">
        <title>Epigenetic regulation of gene programs by EMF1 and EMF2 in Arabidopsis.</title>
        <authorList>
            <person name="Kim S.Y."/>
            <person name="Zhu T."/>
            <person name="Sung Z.R."/>
        </authorList>
    </citation>
    <scope>INDUCTION BY EMF1 AND EMF2</scope>
</reference>
<reference key="17">
    <citation type="journal article" date="2012" name="Plant Cell">
        <title>The phytochrome-interacting VASCULAR PLANT ONE-ZINC FINGER1 and VOZ2 redundantly regulate flowering in Arabidopsis.</title>
        <authorList>
            <person name="Yasui Y."/>
            <person name="Mukougawa K."/>
            <person name="Uemoto M."/>
            <person name="Yokofuji A."/>
            <person name="Suzuri R."/>
            <person name="Nishitani A."/>
            <person name="Kohchi T."/>
        </authorList>
    </citation>
    <scope>INDUCTION</scope>
</reference>
<reference key="18">
    <citation type="journal article" date="2014" name="Nat. Commun.">
        <title>Jumonji demethylases moderate precocious flowering at elevated temperature via regulation of FLC in Arabidopsis.</title>
        <authorList>
            <person name="Gan E.-S."/>
            <person name="Xu Y."/>
            <person name="Wong J.-Y."/>
            <person name="Goh J.G."/>
            <person name="Sun B."/>
            <person name="Wee W.-Y."/>
            <person name="Huang J."/>
            <person name="Ito T."/>
        </authorList>
    </citation>
    <scope>FUNCTION</scope>
    <scope>DISRUPTION PHENOTYPE</scope>
    <scope>INDUCTION BY ELEVATED TEMPERATURES</scope>
    <source>
        <strain>cv. Columbia</strain>
    </source>
</reference>
<keyword id="KW-0025">Alternative splicing</keyword>
<keyword id="KW-0217">Developmental protein</keyword>
<keyword id="KW-0221">Differentiation</keyword>
<keyword id="KW-0238">DNA-binding</keyword>
<keyword id="KW-0287">Flowering</keyword>
<keyword id="KW-0539">Nucleus</keyword>
<keyword id="KW-1185">Reference proteome</keyword>
<keyword id="KW-0678">Repressor</keyword>
<keyword id="KW-0804">Transcription</keyword>
<keyword id="KW-0805">Transcription regulation</keyword>
<comment type="function">
    <text evidence="4 5 10 13">Putative transcription factor that seems to play a central role in the regulation of flowering time in the late-flowering phenotype by interacting with 'FRIGIDA', the autonomous and the vernalization flowering pathways. Inhibits flowering by repressing 'SUPPRESSOR OF OVEREXPRESSION OF CONSTANS 1'. At elevated temperatures (e.g. 29 degrees Celsius), maintained at high levels in a JMJ30/JMJ32-dependent manner to prevent extreme precocious flowering (PubMed:25267112).</text>
</comment>
<comment type="interaction">
    <interactant intactId="EBI-2127872">
        <id>Q9S7Q7</id>
    </interactant>
    <interactant intactId="EBI-592058">
        <id>Q9FVC1</id>
        <label>SVP</label>
    </interactant>
    <organismsDiffer>false</organismsDiffer>
    <experiments>4</experiments>
</comment>
<comment type="subcellular location">
    <subcellularLocation>
        <location evidence="1 3">Nucleus</location>
    </subcellularLocation>
</comment>
<comment type="alternative products">
    <event type="alternative splicing"/>
    <isoform>
        <id>Q9S7Q7-1</id>
        <name>1</name>
        <sequence type="displayed"/>
    </isoform>
    <text>A number of isoforms are produced. According to EST sequences.</text>
</comment>
<comment type="tissue specificity">
    <text evidence="10">High expression in the vegetative apex and in root tissue and lower expression in leaves and stems. Not detected in young tissues of the inflorescence. Before fertilization, expressed in ovules, but not in pollen or stamens, of non-vernalized plants. After vernalization, not detected in ovules.</text>
</comment>
<comment type="developmental stage">
    <text evidence="8 10">Found in shoots of non-flowering plants grown under long-day conditions at days 4 to 15, and in shoots of plants grown under short-day conditions at days 4 to 11 after germination (PubMed:19121105). Expressed in embryos from the early globular stage (PubMed:19121105). FLC is not imprinted and both parental alleles contribute equally to expression in embryos (PubMed:19121105). Expression is repressed during gametogenesis, and is then reactivated after fertilization in embryos (PubMed:19121105). In seedlings, observed in the vasculature of the cotyledons, hypocotyls, and the first pair of leaves (PubMed:18375656). Just prior to flowering, a strong reduction in expression levels occurs in the vasculature (PubMed:18375656).</text>
</comment>
<comment type="induction">
    <text evidence="6 7 9 11 12 13">Epigenetically down-regulated by vernalization. Vernalization repression is initiated by VIN3. Repressed by silencing mediated by polycomb group (PcG) protein complex containing EMF1 and EMF2. Up-regulated by HUA2. Down-regulated by VOZ1 and/or VOZ2. Down-regulated by RBG7. Accumulates at elevated temperatures via a JMJ30/JMJ32-mediated epigenetic regulation (e.g. removal of the repressive histone modification H3 lysine 27 trimethylation (H3K27me3)) (PubMed:25267112).</text>
</comment>
<comment type="disruption phenotype">
    <text evidence="13">Early-flowering phenotype at elevated temperatures (e.g. 29 degrees Celsius) but not at room temperature (e.g. 22 degrees Celsius).</text>
</comment>
<comment type="miscellaneous">
    <text>Prevention of early flowering by expression of FLC requires methylation of 'Lys-36' of histone H3. Repression of FLC is dependent on histone H3 'Lys-4' methylation which is partly controlled by the lysine-specific demthylase 1 (LSD1) homologs, LDL1, LDL2 and FLD. May also be regulated by the level of histone acetylation.</text>
</comment>
<dbReference type="EMBL" id="AF116527">
    <property type="protein sequence ID" value="AAD21248.1"/>
    <property type="molecule type" value="mRNA"/>
</dbReference>
<dbReference type="EMBL" id="AF116528">
    <property type="protein sequence ID" value="AAD21249.1"/>
    <property type="molecule type" value="Genomic_DNA"/>
</dbReference>
<dbReference type="EMBL" id="AL356332">
    <property type="protein sequence ID" value="CAB92055.1"/>
    <property type="molecule type" value="Genomic_DNA"/>
</dbReference>
<dbReference type="EMBL" id="CP002688">
    <property type="protein sequence ID" value="AED91498.1"/>
    <property type="molecule type" value="Genomic_DNA"/>
</dbReference>
<dbReference type="PIR" id="T50018">
    <property type="entry name" value="T50018"/>
</dbReference>
<dbReference type="RefSeq" id="NP_196576.1">
    <molecule id="Q9S7Q7-1"/>
    <property type="nucleotide sequence ID" value="NM_121052.3"/>
</dbReference>
<dbReference type="SMR" id="Q9S7Q7"/>
<dbReference type="BioGRID" id="16156">
    <property type="interactions" value="13"/>
</dbReference>
<dbReference type="DIP" id="DIP-51640N"/>
<dbReference type="FunCoup" id="Q9S7Q7">
    <property type="interactions" value="21"/>
</dbReference>
<dbReference type="IntAct" id="Q9S7Q7">
    <property type="interactions" value="7"/>
</dbReference>
<dbReference type="STRING" id="3702.Q9S7Q7"/>
<dbReference type="PaxDb" id="3702-AT5G10140.1"/>
<dbReference type="EnsemblPlants" id="AT5G10140.1">
    <molecule id="Q9S7Q7-1"/>
    <property type="protein sequence ID" value="AT5G10140.1"/>
    <property type="gene ID" value="AT5G10140"/>
</dbReference>
<dbReference type="GeneID" id="830878"/>
<dbReference type="Gramene" id="AT5G10140.1">
    <molecule id="Q9S7Q7-1"/>
    <property type="protein sequence ID" value="AT5G10140.1"/>
    <property type="gene ID" value="AT5G10140"/>
</dbReference>
<dbReference type="KEGG" id="ath:AT5G10140"/>
<dbReference type="Araport" id="AT5G10140"/>
<dbReference type="TAIR" id="AT5G10140">
    <property type="gene designation" value="FLC"/>
</dbReference>
<dbReference type="eggNOG" id="KOG0014">
    <property type="taxonomic scope" value="Eukaryota"/>
</dbReference>
<dbReference type="HOGENOM" id="CLU_053053_0_4_1"/>
<dbReference type="InParanoid" id="Q9S7Q7"/>
<dbReference type="OMA" id="INHTEYT"/>
<dbReference type="OrthoDB" id="1898716at2759"/>
<dbReference type="PhylomeDB" id="Q9S7Q7"/>
<dbReference type="PRO" id="PR:Q9S7Q7"/>
<dbReference type="Proteomes" id="UP000006548">
    <property type="component" value="Chromosome 5"/>
</dbReference>
<dbReference type="ExpressionAtlas" id="Q9S7Q7">
    <property type="expression patterns" value="baseline and differential"/>
</dbReference>
<dbReference type="GO" id="GO:0005634">
    <property type="term" value="C:nucleus"/>
    <property type="evidence" value="ECO:0007669"/>
    <property type="project" value="UniProtKB-SubCell"/>
</dbReference>
<dbReference type="GO" id="GO:0032991">
    <property type="term" value="C:protein-containing complex"/>
    <property type="evidence" value="ECO:0000314"/>
    <property type="project" value="TAIR"/>
</dbReference>
<dbReference type="GO" id="GO:0003700">
    <property type="term" value="F:DNA-binding transcription factor activity"/>
    <property type="evidence" value="ECO:0000314"/>
    <property type="project" value="TAIR"/>
</dbReference>
<dbReference type="GO" id="GO:0046983">
    <property type="term" value="F:protein dimerization activity"/>
    <property type="evidence" value="ECO:0007669"/>
    <property type="project" value="InterPro"/>
</dbReference>
<dbReference type="GO" id="GO:0000977">
    <property type="term" value="F:RNA polymerase II transcription regulatory region sequence-specific DNA binding"/>
    <property type="evidence" value="ECO:0007669"/>
    <property type="project" value="InterPro"/>
</dbReference>
<dbReference type="GO" id="GO:0000976">
    <property type="term" value="F:transcription cis-regulatory region binding"/>
    <property type="evidence" value="ECO:0000353"/>
    <property type="project" value="TAIR"/>
</dbReference>
<dbReference type="GO" id="GO:0030154">
    <property type="term" value="P:cell differentiation"/>
    <property type="evidence" value="ECO:0007669"/>
    <property type="project" value="UniProtKB-KW"/>
</dbReference>
<dbReference type="GO" id="GO:0009908">
    <property type="term" value="P:flower development"/>
    <property type="evidence" value="ECO:0007669"/>
    <property type="project" value="UniProtKB-KW"/>
</dbReference>
<dbReference type="GO" id="GO:0009910">
    <property type="term" value="P:negative regulation of flower development"/>
    <property type="evidence" value="ECO:0000315"/>
    <property type="project" value="TAIR"/>
</dbReference>
<dbReference type="GO" id="GO:0045944">
    <property type="term" value="P:positive regulation of transcription by RNA polymerase II"/>
    <property type="evidence" value="ECO:0007669"/>
    <property type="project" value="InterPro"/>
</dbReference>
<dbReference type="GO" id="GO:0042752">
    <property type="term" value="P:regulation of circadian rhythm"/>
    <property type="evidence" value="ECO:0000315"/>
    <property type="project" value="TAIR"/>
</dbReference>
<dbReference type="GO" id="GO:2000028">
    <property type="term" value="P:regulation of photoperiodism, flowering"/>
    <property type="evidence" value="ECO:0000315"/>
    <property type="project" value="UniProtKB"/>
</dbReference>
<dbReference type="GO" id="GO:0009266">
    <property type="term" value="P:response to temperature stimulus"/>
    <property type="evidence" value="ECO:0000314"/>
    <property type="project" value="UniProtKB"/>
</dbReference>
<dbReference type="GO" id="GO:0010048">
    <property type="term" value="P:vernalization response"/>
    <property type="evidence" value="ECO:0000270"/>
    <property type="project" value="TAIR"/>
</dbReference>
<dbReference type="CDD" id="cd00265">
    <property type="entry name" value="MADS_MEF2_like"/>
    <property type="match status" value="1"/>
</dbReference>
<dbReference type="FunFam" id="3.40.1810.10:FF:000020">
    <property type="entry name" value="MADS-box protein FLOWERING LOCUS C"/>
    <property type="match status" value="1"/>
</dbReference>
<dbReference type="Gene3D" id="3.40.1810.10">
    <property type="entry name" value="Transcription factor, MADS-box"/>
    <property type="match status" value="1"/>
</dbReference>
<dbReference type="InterPro" id="IPR050142">
    <property type="entry name" value="MADS-box/MEF2_TF"/>
</dbReference>
<dbReference type="InterPro" id="IPR033896">
    <property type="entry name" value="MEF2-like_N"/>
</dbReference>
<dbReference type="InterPro" id="IPR002487">
    <property type="entry name" value="TF_Kbox"/>
</dbReference>
<dbReference type="InterPro" id="IPR002100">
    <property type="entry name" value="TF_MADSbox"/>
</dbReference>
<dbReference type="InterPro" id="IPR036879">
    <property type="entry name" value="TF_MADSbox_sf"/>
</dbReference>
<dbReference type="PANTHER" id="PTHR48019">
    <property type="entry name" value="SERUM RESPONSE FACTOR HOMOLOG"/>
    <property type="match status" value="1"/>
</dbReference>
<dbReference type="Pfam" id="PF01486">
    <property type="entry name" value="K-box"/>
    <property type="match status" value="1"/>
</dbReference>
<dbReference type="Pfam" id="PF00319">
    <property type="entry name" value="SRF-TF"/>
    <property type="match status" value="1"/>
</dbReference>
<dbReference type="PRINTS" id="PR00404">
    <property type="entry name" value="MADSDOMAIN"/>
</dbReference>
<dbReference type="SMART" id="SM00432">
    <property type="entry name" value="MADS"/>
    <property type="match status" value="1"/>
</dbReference>
<dbReference type="SUPFAM" id="SSF55455">
    <property type="entry name" value="SRF-like"/>
    <property type="match status" value="1"/>
</dbReference>
<dbReference type="PROSITE" id="PS51297">
    <property type="entry name" value="K_BOX"/>
    <property type="match status" value="1"/>
</dbReference>
<dbReference type="PROSITE" id="PS00350">
    <property type="entry name" value="MADS_BOX_1"/>
    <property type="match status" value="1"/>
</dbReference>
<dbReference type="PROSITE" id="PS50066">
    <property type="entry name" value="MADS_BOX_2"/>
    <property type="match status" value="1"/>
</dbReference>
<organism>
    <name type="scientific">Arabidopsis thaliana</name>
    <name type="common">Mouse-ear cress</name>
    <dbReference type="NCBI Taxonomy" id="3702"/>
    <lineage>
        <taxon>Eukaryota</taxon>
        <taxon>Viridiplantae</taxon>
        <taxon>Streptophyta</taxon>
        <taxon>Embryophyta</taxon>
        <taxon>Tracheophyta</taxon>
        <taxon>Spermatophyta</taxon>
        <taxon>Magnoliopsida</taxon>
        <taxon>eudicotyledons</taxon>
        <taxon>Gunneridae</taxon>
        <taxon>Pentapetalae</taxon>
        <taxon>rosids</taxon>
        <taxon>malvids</taxon>
        <taxon>Brassicales</taxon>
        <taxon>Brassicaceae</taxon>
        <taxon>Camelineae</taxon>
        <taxon>Arabidopsis</taxon>
    </lineage>
</organism>
<feature type="chain" id="PRO_0000199481" description="MADS-box protein FLOWERING LOCUS C">
    <location>
        <begin position="1"/>
        <end position="196"/>
    </location>
</feature>
<feature type="domain" description="MADS-box" evidence="1">
    <location>
        <begin position="1"/>
        <end position="61"/>
    </location>
</feature>
<feature type="domain" description="K-box" evidence="2">
    <location>
        <begin position="80"/>
        <end position="170"/>
    </location>
</feature>
<feature type="short sequence motif" description="Nuclear localization signal" evidence="3">
    <location>
        <begin position="8"/>
        <end position="15"/>
    </location>
</feature>